<protein>
    <recommendedName>
        <fullName evidence="1">Eukaryotic translation initiation factor 3 subunit M</fullName>
        <shortName evidence="1">eIF3m</shortName>
    </recommendedName>
</protein>
<sequence length="426" mass="48756">MAAPQLIFVDGTFAELAQEMAEYVQIGEQVKPYLAKEQNEEALQAIIEASHVLNSIPEKEFTGAYNLLIHLVLQSKDPLKYLPPLCGNLQKPITSSPAHGFTLAANALSTVFNLLEPDNPTRFNVLLQITRFIRQHGQYDLLKPRLENLEGWFNLWNTSDEDQRRLYVEVSDTAAEAGDDEDSYRYLIKAIATFGREDQDEITSEEAQKLSLKAVRLAISHPARFDFQDLRILPSVQALGDSHPVYSQLLDIFIEQDLEDYNDFKDEHEGWVEKEKLDNEKLQRKMRLLTFASLAASTPNREIPYANIAKALQIPSEEVEMWTIDVVRAKLVEGRLSQQQKVFLVHRTTYRVFGEKQWRELATRVDQYKSIVDQLLVFLRKGQADVEGQREREQQELERKLAGAGMGGGPGGDRRRQQKPRTDEDD</sequence>
<organism>
    <name type="scientific">Chaetomium globosum (strain ATCC 6205 / CBS 148.51 / DSM 1962 / NBRC 6347 / NRRL 1970)</name>
    <name type="common">Soil fungus</name>
    <dbReference type="NCBI Taxonomy" id="306901"/>
    <lineage>
        <taxon>Eukaryota</taxon>
        <taxon>Fungi</taxon>
        <taxon>Dikarya</taxon>
        <taxon>Ascomycota</taxon>
        <taxon>Pezizomycotina</taxon>
        <taxon>Sordariomycetes</taxon>
        <taxon>Sordariomycetidae</taxon>
        <taxon>Sordariales</taxon>
        <taxon>Chaetomiaceae</taxon>
        <taxon>Chaetomium</taxon>
    </lineage>
</organism>
<dbReference type="EMBL" id="CH408029">
    <property type="protein sequence ID" value="EAQ93225.1"/>
    <property type="status" value="ALT_INIT"/>
    <property type="molecule type" value="Genomic_DNA"/>
</dbReference>
<dbReference type="RefSeq" id="XP_001220681.1">
    <property type="nucleotide sequence ID" value="XM_001220680.1"/>
</dbReference>
<dbReference type="SMR" id="Q2HE94"/>
<dbReference type="STRING" id="306901.Q2HE94"/>
<dbReference type="GeneID" id="4387055"/>
<dbReference type="VEuPathDB" id="FungiDB:CHGG_01460"/>
<dbReference type="eggNOG" id="KOG2753">
    <property type="taxonomic scope" value="Eukaryota"/>
</dbReference>
<dbReference type="HOGENOM" id="CLU_035254_0_0_1"/>
<dbReference type="InParanoid" id="Q2HE94"/>
<dbReference type="OrthoDB" id="10267031at2759"/>
<dbReference type="Proteomes" id="UP000001056">
    <property type="component" value="Unassembled WGS sequence"/>
</dbReference>
<dbReference type="GO" id="GO:0016282">
    <property type="term" value="C:eukaryotic 43S preinitiation complex"/>
    <property type="evidence" value="ECO:0007669"/>
    <property type="project" value="UniProtKB-UniRule"/>
</dbReference>
<dbReference type="GO" id="GO:0033290">
    <property type="term" value="C:eukaryotic 48S preinitiation complex"/>
    <property type="evidence" value="ECO:0007669"/>
    <property type="project" value="UniProtKB-UniRule"/>
</dbReference>
<dbReference type="GO" id="GO:0071541">
    <property type="term" value="C:eukaryotic translation initiation factor 3 complex, eIF3m"/>
    <property type="evidence" value="ECO:0007669"/>
    <property type="project" value="UniProtKB-UniRule"/>
</dbReference>
<dbReference type="GO" id="GO:0003743">
    <property type="term" value="F:translation initiation factor activity"/>
    <property type="evidence" value="ECO:0007669"/>
    <property type="project" value="UniProtKB-UniRule"/>
</dbReference>
<dbReference type="GO" id="GO:0001732">
    <property type="term" value="P:formation of cytoplasmic translation initiation complex"/>
    <property type="evidence" value="ECO:0007669"/>
    <property type="project" value="UniProtKB-UniRule"/>
</dbReference>
<dbReference type="HAMAP" id="MF_03012">
    <property type="entry name" value="eIF3m"/>
    <property type="match status" value="1"/>
</dbReference>
<dbReference type="InterPro" id="IPR045237">
    <property type="entry name" value="COPS7/eIF3m"/>
</dbReference>
<dbReference type="InterPro" id="IPR027528">
    <property type="entry name" value="eIF3m"/>
</dbReference>
<dbReference type="InterPro" id="IPR000717">
    <property type="entry name" value="PCI_dom"/>
</dbReference>
<dbReference type="PANTHER" id="PTHR15350">
    <property type="entry name" value="COP9 SIGNALOSOME COMPLEX SUBUNIT 7/DENDRITIC CELL PROTEIN GA17"/>
    <property type="match status" value="1"/>
</dbReference>
<dbReference type="PANTHER" id="PTHR15350:SF2">
    <property type="entry name" value="EUKARYOTIC TRANSLATION INITIATION FACTOR 3 SUBUNIT M"/>
    <property type="match status" value="1"/>
</dbReference>
<dbReference type="Pfam" id="PF01399">
    <property type="entry name" value="PCI"/>
    <property type="match status" value="1"/>
</dbReference>
<dbReference type="SMART" id="SM00088">
    <property type="entry name" value="PINT"/>
    <property type="match status" value="1"/>
</dbReference>
<dbReference type="PROSITE" id="PS50250">
    <property type="entry name" value="PCI"/>
    <property type="match status" value="1"/>
</dbReference>
<evidence type="ECO:0000255" key="1">
    <source>
        <dbReference type="HAMAP-Rule" id="MF_03012"/>
    </source>
</evidence>
<evidence type="ECO:0000255" key="2">
    <source>
        <dbReference type="PROSITE-ProRule" id="PRU01185"/>
    </source>
</evidence>
<evidence type="ECO:0000256" key="3">
    <source>
        <dbReference type="SAM" id="MobiDB-lite"/>
    </source>
</evidence>
<evidence type="ECO:0000305" key="4"/>
<feature type="chain" id="PRO_0000366016" description="Eukaryotic translation initiation factor 3 subunit M">
    <location>
        <begin position="1"/>
        <end position="426"/>
    </location>
</feature>
<feature type="domain" description="PCI" evidence="2">
    <location>
        <begin position="179"/>
        <end position="350"/>
    </location>
</feature>
<feature type="region of interest" description="Disordered" evidence="3">
    <location>
        <begin position="385"/>
        <end position="426"/>
    </location>
</feature>
<feature type="compositionally biased region" description="Basic and acidic residues" evidence="3">
    <location>
        <begin position="385"/>
        <end position="401"/>
    </location>
</feature>
<proteinExistence type="inferred from homology"/>
<accession>Q2HE94</accession>
<name>EIF3M_CHAGB</name>
<comment type="function">
    <text evidence="1">Component of the eukaryotic translation initiation factor 3 (eIF-3) complex, which is involved in protein synthesis of a specialized repertoire of mRNAs and, together with other initiation factors, stimulates binding of mRNA and methionyl-tRNAi to the 40S ribosome. The eIF-3 complex specifically targets and initiates translation of a subset of mRNAs involved in cell proliferation.</text>
</comment>
<comment type="subunit">
    <text evidence="1">Component of the eukaryotic translation initiation factor 3 (eIF-3) complex.</text>
</comment>
<comment type="subcellular location">
    <subcellularLocation>
        <location evidence="1">Cytoplasm</location>
    </subcellularLocation>
</comment>
<comment type="similarity">
    <text evidence="1">Belongs to the eIF-3 subunit M family.</text>
</comment>
<comment type="sequence caution" evidence="4">
    <conflict type="erroneous initiation">
        <sequence resource="EMBL-CDS" id="EAQ93225"/>
    </conflict>
</comment>
<reference key="1">
    <citation type="journal article" date="2015" name="Genome Announc.">
        <title>Draft genome sequence of the cellulolytic fungus Chaetomium globosum.</title>
        <authorList>
            <person name="Cuomo C.A."/>
            <person name="Untereiner W.A."/>
            <person name="Ma L.-J."/>
            <person name="Grabherr M."/>
            <person name="Birren B.W."/>
        </authorList>
    </citation>
    <scope>NUCLEOTIDE SEQUENCE [LARGE SCALE GENOMIC DNA]</scope>
    <source>
        <strain>ATCC 6205 / CBS 148.51 / DSM 1962 / NBRC 6347 / NRRL 1970</strain>
    </source>
</reference>
<keyword id="KW-0963">Cytoplasm</keyword>
<keyword id="KW-0396">Initiation factor</keyword>
<keyword id="KW-0648">Protein biosynthesis</keyword>
<keyword id="KW-1185">Reference proteome</keyword>
<gene>
    <name type="ORF">CHGG_01460</name>
</gene>